<protein>
    <recommendedName>
        <fullName>Antitoxin DinJ</fullName>
    </recommendedName>
</protein>
<keyword id="KW-0002">3D-structure</keyword>
<keyword id="KW-0238">DNA-binding</keyword>
<keyword id="KW-1185">Reference proteome</keyword>
<keyword id="KW-0678">Repressor</keyword>
<keyword id="KW-1277">Toxin-antitoxin system</keyword>
<keyword id="KW-0804">Transcription</keyword>
<keyword id="KW-0805">Transcription regulation</keyword>
<dbReference type="EMBL" id="D38582">
    <property type="protein sequence ID" value="BAA07588.1"/>
    <property type="molecule type" value="Genomic_DNA"/>
</dbReference>
<dbReference type="EMBL" id="U00096">
    <property type="protein sequence ID" value="AAC73330.1"/>
    <property type="molecule type" value="Genomic_DNA"/>
</dbReference>
<dbReference type="EMBL" id="AP009048">
    <property type="protein sequence ID" value="BAA77896.1"/>
    <property type="molecule type" value="Genomic_DNA"/>
</dbReference>
<dbReference type="PIR" id="C64747">
    <property type="entry name" value="C64747"/>
</dbReference>
<dbReference type="RefSeq" id="NP_414761.1">
    <property type="nucleotide sequence ID" value="NC_000913.3"/>
</dbReference>
<dbReference type="RefSeq" id="WP_000729703.1">
    <property type="nucleotide sequence ID" value="NZ_SSZK01000029.1"/>
</dbReference>
<dbReference type="PDB" id="4Q2U">
    <property type="method" value="X-ray"/>
    <property type="resolution" value="1.80 A"/>
    <property type="chains" value="A/C/E/G/I/K/M/O=1-86"/>
</dbReference>
<dbReference type="PDBsum" id="4Q2U"/>
<dbReference type="SMR" id="Q47150"/>
<dbReference type="BioGRID" id="4259772">
    <property type="interactions" value="55"/>
</dbReference>
<dbReference type="BioGRID" id="849313">
    <property type="interactions" value="3"/>
</dbReference>
<dbReference type="ComplexPortal" id="CPX-1079">
    <property type="entry name" value="DinJ-YafQ toxin-antitoxin complex"/>
</dbReference>
<dbReference type="DIP" id="DIP-9446N"/>
<dbReference type="FunCoup" id="Q47150">
    <property type="interactions" value="5"/>
</dbReference>
<dbReference type="IntAct" id="Q47150">
    <property type="interactions" value="2"/>
</dbReference>
<dbReference type="STRING" id="511145.b0226"/>
<dbReference type="jPOST" id="Q47150"/>
<dbReference type="PaxDb" id="511145-b0226"/>
<dbReference type="EnsemblBacteria" id="AAC73330">
    <property type="protein sequence ID" value="AAC73330"/>
    <property type="gene ID" value="b0226"/>
</dbReference>
<dbReference type="GeneID" id="944914"/>
<dbReference type="KEGG" id="ecj:JW0216"/>
<dbReference type="KEGG" id="eco:b0226"/>
<dbReference type="KEGG" id="ecoc:C3026_01070"/>
<dbReference type="KEGG" id="ecoc:C3026_23810"/>
<dbReference type="PATRIC" id="fig|1411691.4.peg.2057"/>
<dbReference type="EchoBASE" id="EB2936"/>
<dbReference type="eggNOG" id="COG3077">
    <property type="taxonomic scope" value="Bacteria"/>
</dbReference>
<dbReference type="HOGENOM" id="CLU_154558_12_2_6"/>
<dbReference type="InParanoid" id="Q47150"/>
<dbReference type="OMA" id="AMFKNWE"/>
<dbReference type="OrthoDB" id="3174560at2"/>
<dbReference type="PhylomeDB" id="Q47150"/>
<dbReference type="BioCyc" id="EcoCyc:G6110-MONOMER"/>
<dbReference type="BioCyc" id="MetaCyc:G6110-MONOMER"/>
<dbReference type="EvolutionaryTrace" id="Q47150"/>
<dbReference type="PRO" id="PR:Q47150"/>
<dbReference type="Proteomes" id="UP000000625">
    <property type="component" value="Chromosome"/>
</dbReference>
<dbReference type="CollecTF" id="EXPREG_00000df0"/>
<dbReference type="GO" id="GO:0110001">
    <property type="term" value="C:toxin-antitoxin complex"/>
    <property type="evidence" value="ECO:0000353"/>
    <property type="project" value="ComplexPortal"/>
</dbReference>
<dbReference type="GO" id="GO:0000987">
    <property type="term" value="F:cis-regulatory region sequence-specific DNA binding"/>
    <property type="evidence" value="ECO:0000314"/>
    <property type="project" value="EcoCyc"/>
</dbReference>
<dbReference type="GO" id="GO:0003677">
    <property type="term" value="F:DNA binding"/>
    <property type="evidence" value="ECO:0000314"/>
    <property type="project" value="EcoCyc"/>
</dbReference>
<dbReference type="GO" id="GO:0042803">
    <property type="term" value="F:protein homodimerization activity"/>
    <property type="evidence" value="ECO:0000314"/>
    <property type="project" value="EcoCyc"/>
</dbReference>
<dbReference type="GO" id="GO:0015643">
    <property type="term" value="F:toxic substance binding"/>
    <property type="evidence" value="ECO:0000314"/>
    <property type="project" value="EcoCyc"/>
</dbReference>
<dbReference type="GO" id="GO:0006351">
    <property type="term" value="P:DNA-templated transcription"/>
    <property type="evidence" value="ECO:0000318"/>
    <property type="project" value="GO_Central"/>
</dbReference>
<dbReference type="GO" id="GO:0045892">
    <property type="term" value="P:negative regulation of DNA-templated transcription"/>
    <property type="evidence" value="ECO:0000314"/>
    <property type="project" value="ComplexPortal"/>
</dbReference>
<dbReference type="GO" id="GO:2000143">
    <property type="term" value="P:negative regulation of DNA-templated transcription initiation"/>
    <property type="evidence" value="ECO:0000314"/>
    <property type="project" value="EcoCyc"/>
</dbReference>
<dbReference type="GO" id="GO:0040008">
    <property type="term" value="P:regulation of growth"/>
    <property type="evidence" value="ECO:0000303"/>
    <property type="project" value="ComplexPortal"/>
</dbReference>
<dbReference type="GO" id="GO:0044010">
    <property type="term" value="P:single-species biofilm formation"/>
    <property type="evidence" value="ECO:0000314"/>
    <property type="project" value="ComplexPortal"/>
</dbReference>
<dbReference type="FunFam" id="1.10.1220.10:FF:000007">
    <property type="entry name" value="Addiction module antitoxin, RelB/DinJ family"/>
    <property type="match status" value="1"/>
</dbReference>
<dbReference type="Gene3D" id="1.10.1220.10">
    <property type="entry name" value="Met repressor-like"/>
    <property type="match status" value="1"/>
</dbReference>
<dbReference type="InterPro" id="IPR013321">
    <property type="entry name" value="Arc_rbn_hlx_hlx"/>
</dbReference>
<dbReference type="InterPro" id="IPR026262">
    <property type="entry name" value="DinJ"/>
</dbReference>
<dbReference type="InterPro" id="IPR007337">
    <property type="entry name" value="RelB/DinJ"/>
</dbReference>
<dbReference type="NCBIfam" id="TIGR02384">
    <property type="entry name" value="RelB_DinJ"/>
    <property type="match status" value="1"/>
</dbReference>
<dbReference type="PANTHER" id="PTHR38781">
    <property type="entry name" value="ANTITOXIN DINJ-RELATED"/>
    <property type="match status" value="1"/>
</dbReference>
<dbReference type="PANTHER" id="PTHR38781:SF1">
    <property type="entry name" value="ANTITOXIN DINJ-RELATED"/>
    <property type="match status" value="1"/>
</dbReference>
<dbReference type="Pfam" id="PF04221">
    <property type="entry name" value="RelB"/>
    <property type="match status" value="1"/>
</dbReference>
<dbReference type="PIRSF" id="PIRSF003108">
    <property type="entry name" value="DinJ"/>
    <property type="match status" value="1"/>
</dbReference>
<comment type="function">
    <text evidence="1 4">Antitoxin component of a type II toxin-antitoxin (TA) system (PubMed:17263853). A labile antitoxin that counteracts the effect of cognate toxin YafQ (PubMed:17263853). YafQ and DinJ together bind their own promoter, and repress its expression (PubMed:24898247). There are 2 operators with imperfect inverted repeats (IR) in the dinJ promoter, YafQ-(DinJ)2-YafQ only binds to the first (most upstream) of them to repress transcription; binding to a single IR is sufficient for activity in vivo and in vitro (PubMed:24898247). DinJ alone is as potent a transcriptional repressor as the heterotetramer and also only needs to bind 1 IR to act (PubMed:24898247).</text>
</comment>
<comment type="function">
    <text evidence="3">Cell death governed by the MazE-MazF and DinJ-YafQ TA systems seems to play a role in biofilm formation (PubMed:19707553).</text>
</comment>
<comment type="subunit">
    <text evidence="1 2 4">Forms a heterotetramer with antitoxin DinJ, with 2 YafQ-DinJ dimers associated via the N-terminus of the DinJ antitoxins (YafQ-(DinJ)2-YafQ) (PubMed:17263853, PubMed:24898247). In this complex the toxin activity is inhibited.</text>
</comment>
<comment type="induction">
    <text evidence="2 4">Not induced by the DNA damaging agent mitomycin C (PubMed:19210620). Transcription is autorepressed by DinJ or YafQ-(DinJ)2-YafQ via operator 1, repressed by LexA via operator 2 (PubMed:24898247).</text>
</comment>
<comment type="PTM">
    <text evidence="2">Probably degraded by the Lon and ClpPX proteases in vivo.</text>
</comment>
<comment type="disruption phenotype">
    <text evidence="3">Cells missing dinJ-yafQ have reduced biofilm formation.</text>
</comment>
<comment type="similarity">
    <text evidence="5">Belongs to the RelB/DinJ antitoxin family.</text>
</comment>
<name>DINJ_ECOLI</name>
<proteinExistence type="evidence at protein level"/>
<organism>
    <name type="scientific">Escherichia coli (strain K12)</name>
    <dbReference type="NCBI Taxonomy" id="83333"/>
    <lineage>
        <taxon>Bacteria</taxon>
        <taxon>Pseudomonadati</taxon>
        <taxon>Pseudomonadota</taxon>
        <taxon>Gammaproteobacteria</taxon>
        <taxon>Enterobacterales</taxon>
        <taxon>Enterobacteriaceae</taxon>
        <taxon>Escherichia</taxon>
    </lineage>
</organism>
<reference key="1">
    <citation type="journal article" date="1995" name="Mutat. Res.">
        <title>dinP, a new gene in Escherichia coli, whose product shows similarities to UmuC and its homologues.</title>
        <authorList>
            <person name="Ohmori H."/>
            <person name="Hatada E."/>
            <person name="Qiao Y."/>
            <person name="Tsuji M."/>
            <person name="Fukuda R."/>
        </authorList>
    </citation>
    <scope>NUCLEOTIDE SEQUENCE [GENOMIC DNA]</scope>
    <source>
        <strain>K12 / W3110 / ATCC 27325 / DSM 5911</strain>
    </source>
</reference>
<reference key="2">
    <citation type="submission" date="1996-02" db="EMBL/GenBank/DDBJ databases">
        <title>Systematic sequencing of the Escherichia coli genome: analysis of the 4.0 - 6.0 min (189,987 - 281,416bp) region.</title>
        <authorList>
            <person name="Takemoto K."/>
            <person name="Mori H."/>
            <person name="Murayama N."/>
            <person name="Kataoka K."/>
            <person name="Yano M."/>
            <person name="Itoh T."/>
            <person name="Yamamoto Y."/>
            <person name="Inokuchi H."/>
            <person name="Miki T."/>
            <person name="Hatada E."/>
            <person name="Fukuda R."/>
            <person name="Ichihara S."/>
            <person name="Mizuno T."/>
            <person name="Makino K."/>
            <person name="Nakata A."/>
            <person name="Yura T."/>
            <person name="Sampei G."/>
            <person name="Mizobuchi K."/>
        </authorList>
    </citation>
    <scope>NUCLEOTIDE SEQUENCE [LARGE SCALE GENOMIC DNA]</scope>
    <source>
        <strain>K12 / W3110 / ATCC 27325 / DSM 5911</strain>
    </source>
</reference>
<reference key="3">
    <citation type="journal article" date="1997" name="Science">
        <title>The complete genome sequence of Escherichia coli K-12.</title>
        <authorList>
            <person name="Blattner F.R."/>
            <person name="Plunkett G. III"/>
            <person name="Bloch C.A."/>
            <person name="Perna N.T."/>
            <person name="Burland V."/>
            <person name="Riley M."/>
            <person name="Collado-Vides J."/>
            <person name="Glasner J.D."/>
            <person name="Rode C.K."/>
            <person name="Mayhew G.F."/>
            <person name="Gregor J."/>
            <person name="Davis N.W."/>
            <person name="Kirkpatrick H.A."/>
            <person name="Goeden M.A."/>
            <person name="Rose D.J."/>
            <person name="Mau B."/>
            <person name="Shao Y."/>
        </authorList>
    </citation>
    <scope>NUCLEOTIDE SEQUENCE [LARGE SCALE GENOMIC DNA]</scope>
    <source>
        <strain>K12 / MG1655 / ATCC 47076</strain>
    </source>
</reference>
<reference key="4">
    <citation type="journal article" date="2006" name="Mol. Syst. Biol.">
        <title>Highly accurate genome sequences of Escherichia coli K-12 strains MG1655 and W3110.</title>
        <authorList>
            <person name="Hayashi K."/>
            <person name="Morooka N."/>
            <person name="Yamamoto Y."/>
            <person name="Fujita K."/>
            <person name="Isono K."/>
            <person name="Choi S."/>
            <person name="Ohtsubo E."/>
            <person name="Baba T."/>
            <person name="Wanner B.L."/>
            <person name="Mori H."/>
            <person name="Horiuchi T."/>
        </authorList>
    </citation>
    <scope>NUCLEOTIDE SEQUENCE [LARGE SCALE GENOMIC DNA]</scope>
    <source>
        <strain>K12 / W3110 / ATCC 27325 / DSM 5911</strain>
    </source>
</reference>
<reference key="5">
    <citation type="journal article" date="2007" name="FEMS Microbiol. Lett.">
        <title>Escherichia coli dinJ-yafQ genes act as a toxin-antitoxin module.</title>
        <authorList>
            <person name="Motiejunaite R."/>
            <person name="Armalyte J."/>
            <person name="Markuckas A."/>
            <person name="Suziedeliene E."/>
        </authorList>
    </citation>
    <scope>FUNCTION AS AN ANTITOXIN</scope>
    <scope>SUBUNIT</scope>
    <source>
        <strain>K12 / BW25113</strain>
    </source>
</reference>
<reference key="6">
    <citation type="journal article" date="2009" name="Mol. Microbiol.">
        <title>Bacterial toxin YafQ is an endoribonuclease that associates with the ribosome and blocks translation elongation through sequence-specific and frame-dependent mRNA cleavage.</title>
        <authorList>
            <person name="Prysak M.H."/>
            <person name="Mozdzierz C.J."/>
            <person name="Cook A.M."/>
            <person name="Zhu L."/>
            <person name="Zhang Y."/>
            <person name="Inouye M."/>
            <person name="Woychik N.A."/>
        </authorList>
    </citation>
    <scope>FUNCTION AS AN ANTITOXIN</scope>
    <scope>CLEAVAGE BY LON AND CLPX PROTEASES</scope>
    <scope>SUBUNIT</scope>
    <scope>DNA-BINDING</scope>
    <scope>INDUCTION</scope>
    <source>
        <strain>K12 / BW25113</strain>
        <strain>K12 / DH5-alpha</strain>
    </source>
</reference>
<reference key="7">
    <citation type="journal article" date="2009" name="PLoS ONE">
        <title>A differential effect of E. coli toxin-antitoxin systems on cell death in liquid media and biofilm formation.</title>
        <authorList>
            <person name="Kolodkin-Gal I."/>
            <person name="Verdiger R."/>
            <person name="Shlosberg-Fedida A."/>
            <person name="Engelberg-Kulka H."/>
        </authorList>
    </citation>
    <scope>FUNCTION IN BIOFILM FORMATION</scope>
    <scope>DEVELOPMENTAL STAGE</scope>
    <scope>DISRUPTION PHENOTYPE</scope>
    <source>
        <strain>K12 / MC4100 / ATCC 35695 / DSM 6574</strain>
    </source>
</reference>
<reference evidence="6" key="8">
    <citation type="journal article" date="2014" name="J. Biol. Chem.">
        <title>Mechanisms of toxin inhibition and transcriptional repression by Escherichia coli DinJ-YafQ.</title>
        <authorList>
            <person name="Ruangprasert A."/>
            <person name="Maehigashi T."/>
            <person name="Miles S.J."/>
            <person name="Giridharan N."/>
            <person name="Liu J.X."/>
            <person name="Dunham C.M."/>
        </authorList>
    </citation>
    <scope>X-RAY CRYSTALLOGRAPHY (1.80 ANGSTROMS)</scope>
    <scope>FUNCTION AS A REPRESSOR</scope>
    <scope>SUBUNIT</scope>
    <scope>INDUCTION</scope>
    <scope>DNA-BINDING</scope>
    <scope>MUTAGENESIS OF 2-ALA--ASP-12; 2-ALA--GLU-44; ARG-10 AND ARG-35</scope>
</reference>
<evidence type="ECO:0000269" key="1">
    <source>
    </source>
</evidence>
<evidence type="ECO:0000269" key="2">
    <source>
    </source>
</evidence>
<evidence type="ECO:0000269" key="3">
    <source>
    </source>
</evidence>
<evidence type="ECO:0000269" key="4">
    <source>
    </source>
</evidence>
<evidence type="ECO:0000305" key="5"/>
<evidence type="ECO:0007744" key="6">
    <source>
        <dbReference type="PDB" id="4Q2U"/>
    </source>
</evidence>
<evidence type="ECO:0007829" key="7">
    <source>
        <dbReference type="PDB" id="4Q2U"/>
    </source>
</evidence>
<feature type="chain" id="PRO_0000079903" description="Antitoxin DinJ">
    <location>
        <begin position="1"/>
        <end position="86"/>
    </location>
</feature>
<feature type="mutagenesis site" description="About 50% loss of promoter repression, probably forms YafQ-DinQ dimers." evidence="4">
    <location>
        <begin position="2"/>
        <end position="44"/>
    </location>
</feature>
<feature type="mutagenesis site" description="About 75% loss of promoter repression, probably forms YafQ-DinQ tetramers." evidence="4">
    <location>
        <begin position="2"/>
        <end position="12"/>
    </location>
</feature>
<feature type="mutagenesis site" description="Nearly complete loss of promoter repression, YafQ-(DinJ)2-YafQ no longer binds DNA." evidence="4">
    <original>R</original>
    <variation>A</variation>
    <location>
        <position position="10"/>
    </location>
</feature>
<feature type="mutagenesis site" description="About 90% loss of promoter repression, YafQ-(DinJ)2-YafQ no longer binds DNA." evidence="4">
    <original>R</original>
    <variation>A</variation>
    <location>
        <position position="35"/>
    </location>
</feature>
<feature type="strand" evidence="7">
    <location>
        <begin position="4"/>
        <end position="11"/>
    </location>
</feature>
<feature type="helix" evidence="7">
    <location>
        <begin position="13"/>
        <end position="24"/>
    </location>
</feature>
<feature type="turn" evidence="7">
    <location>
        <begin position="25"/>
        <end position="27"/>
    </location>
</feature>
<feature type="helix" evidence="7">
    <location>
        <begin position="30"/>
        <end position="44"/>
    </location>
</feature>
<feature type="helix" evidence="7">
    <location>
        <begin position="56"/>
        <end position="67"/>
    </location>
</feature>
<feature type="turn" evidence="7">
    <location>
        <begin position="68"/>
        <end position="70"/>
    </location>
</feature>
<feature type="strand" evidence="7">
    <location>
        <begin position="71"/>
        <end position="76"/>
    </location>
</feature>
<feature type="helix" evidence="7">
    <location>
        <begin position="77"/>
        <end position="84"/>
    </location>
</feature>
<gene>
    <name type="primary">dinJ</name>
    <name type="ordered locus">b0226</name>
    <name type="ordered locus">JW0216</name>
</gene>
<sequence>MAANAFVRARIDEDLKNQAADVLAGMGLTISDLVRITLTKVAREKALPFDLREPNQLTIQSIKNSEAGIDVHKAKDADDLFDKLGI</sequence>
<accession>Q47150</accession>